<feature type="chain" id="PRO_0000248439" description="Uncharacterized protein YBR196C-B">
    <location>
        <begin position="1"/>
        <end position="34"/>
    </location>
</feature>
<accession>Q3E778</accession>
<accession>D6VQJ2</accession>
<proteinExistence type="evidence at protein level"/>
<protein>
    <recommendedName>
        <fullName>Uncharacterized protein YBR196C-B</fullName>
    </recommendedName>
</protein>
<dbReference type="EMBL" id="Z36066">
    <property type="status" value="NOT_ANNOTATED_CDS"/>
    <property type="molecule type" value="Genomic_DNA"/>
</dbReference>
<dbReference type="EMBL" id="BK006936">
    <property type="protein sequence ID" value="DAA07312.1"/>
    <property type="molecule type" value="Genomic_DNA"/>
</dbReference>
<dbReference type="RefSeq" id="NP_878052.3">
    <property type="nucleotide sequence ID" value="NM_001184643.3"/>
</dbReference>
<dbReference type="BioGRID" id="36990">
    <property type="interactions" value="12"/>
</dbReference>
<dbReference type="FunCoup" id="Q3E778">
    <property type="interactions" value="9"/>
</dbReference>
<dbReference type="STRING" id="4932.YBR196C-B"/>
<dbReference type="PaxDb" id="4932-YBR196C-B"/>
<dbReference type="TopDownProteomics" id="Q3E778"/>
<dbReference type="EnsemblFungi" id="YBR196C-B_mRNA">
    <property type="protein sequence ID" value="YBR196C-B"/>
    <property type="gene ID" value="YBR196C-B"/>
</dbReference>
<dbReference type="GeneID" id="1466448"/>
<dbReference type="KEGG" id="sce:YBR196C-B"/>
<dbReference type="AGR" id="SGD:S000028816"/>
<dbReference type="SGD" id="S000028816">
    <property type="gene designation" value="YBR196C-B"/>
</dbReference>
<dbReference type="VEuPathDB" id="FungiDB:YBR196C-B"/>
<dbReference type="HOGENOM" id="CLU_3377355_0_0_1"/>
<dbReference type="InParanoid" id="Q3E778"/>
<dbReference type="BioCyc" id="YEAST:G3O-29268-MONOMER"/>
<dbReference type="BioGRID-ORCS" id="1466448">
    <property type="hits" value="0 hits in 10 CRISPR screens"/>
</dbReference>
<dbReference type="PRO" id="PR:Q3E778"/>
<dbReference type="Proteomes" id="UP000002311">
    <property type="component" value="Chromosome II"/>
</dbReference>
<organism>
    <name type="scientific">Saccharomyces cerevisiae (strain ATCC 204508 / S288c)</name>
    <name type="common">Baker's yeast</name>
    <dbReference type="NCBI Taxonomy" id="559292"/>
    <lineage>
        <taxon>Eukaryota</taxon>
        <taxon>Fungi</taxon>
        <taxon>Dikarya</taxon>
        <taxon>Ascomycota</taxon>
        <taxon>Saccharomycotina</taxon>
        <taxon>Saccharomycetes</taxon>
        <taxon>Saccharomycetales</taxon>
        <taxon>Saccharomycetaceae</taxon>
        <taxon>Saccharomyces</taxon>
    </lineage>
</organism>
<gene>
    <name type="ordered locus">YBR196C-B</name>
</gene>
<reference key="1">
    <citation type="journal article" date="1994" name="EMBO J.">
        <title>Complete DNA sequence of yeast chromosome II.</title>
        <authorList>
            <person name="Feldmann H."/>
            <person name="Aigle M."/>
            <person name="Aljinovic G."/>
            <person name="Andre B."/>
            <person name="Baclet M.C."/>
            <person name="Barthe C."/>
            <person name="Baur A."/>
            <person name="Becam A.-M."/>
            <person name="Biteau N."/>
            <person name="Boles E."/>
            <person name="Brandt T."/>
            <person name="Brendel M."/>
            <person name="Brueckner M."/>
            <person name="Bussereau F."/>
            <person name="Christiansen C."/>
            <person name="Contreras R."/>
            <person name="Crouzet M."/>
            <person name="Cziepluch C."/>
            <person name="Demolis N."/>
            <person name="Delaveau T."/>
            <person name="Doignon F."/>
            <person name="Domdey H."/>
            <person name="Duesterhus S."/>
            <person name="Dubois E."/>
            <person name="Dujon B."/>
            <person name="El Bakkoury M."/>
            <person name="Entian K.-D."/>
            <person name="Feuermann M."/>
            <person name="Fiers W."/>
            <person name="Fobo G.M."/>
            <person name="Fritz C."/>
            <person name="Gassenhuber J."/>
            <person name="Glansdorff N."/>
            <person name="Goffeau A."/>
            <person name="Grivell L.A."/>
            <person name="de Haan M."/>
            <person name="Hein C."/>
            <person name="Herbert C.J."/>
            <person name="Hollenberg C.P."/>
            <person name="Holmstroem K."/>
            <person name="Jacq C."/>
            <person name="Jacquet M."/>
            <person name="Jauniaux J.-C."/>
            <person name="Jonniaux J.-L."/>
            <person name="Kallesoee T."/>
            <person name="Kiesau P."/>
            <person name="Kirchrath L."/>
            <person name="Koetter P."/>
            <person name="Korol S."/>
            <person name="Liebl S."/>
            <person name="Logghe M."/>
            <person name="Lohan A.J.E."/>
            <person name="Louis E.J."/>
            <person name="Li Z.Y."/>
            <person name="Maat M.J."/>
            <person name="Mallet L."/>
            <person name="Mannhaupt G."/>
            <person name="Messenguy F."/>
            <person name="Miosga T."/>
            <person name="Molemans F."/>
            <person name="Mueller S."/>
            <person name="Nasr F."/>
            <person name="Obermaier B."/>
            <person name="Perea J."/>
            <person name="Pierard A."/>
            <person name="Piravandi E."/>
            <person name="Pohl F.M."/>
            <person name="Pohl T.M."/>
            <person name="Potier S."/>
            <person name="Proft M."/>
            <person name="Purnelle B."/>
            <person name="Ramezani Rad M."/>
            <person name="Rieger M."/>
            <person name="Rose M."/>
            <person name="Schaaff-Gerstenschlaeger I."/>
            <person name="Scherens B."/>
            <person name="Schwarzlose C."/>
            <person name="Skala J."/>
            <person name="Slonimski P.P."/>
            <person name="Smits P.H.M."/>
            <person name="Souciet J.-L."/>
            <person name="Steensma H.Y."/>
            <person name="Stucka R."/>
            <person name="Urrestarazu L.A."/>
            <person name="van der Aart Q.J.M."/>
            <person name="Van Dyck L."/>
            <person name="Vassarotti A."/>
            <person name="Vetter I."/>
            <person name="Vierendeels F."/>
            <person name="Vissers S."/>
            <person name="Wagner G."/>
            <person name="de Wergifosse P."/>
            <person name="Wolfe K.H."/>
            <person name="Zagulski M."/>
            <person name="Zimmermann F.K."/>
            <person name="Mewes H.-W."/>
            <person name="Kleine K."/>
        </authorList>
    </citation>
    <scope>NUCLEOTIDE SEQUENCE [LARGE SCALE GENOMIC DNA]</scope>
    <source>
        <strain>ATCC 204508 / S288c</strain>
    </source>
</reference>
<reference key="2">
    <citation type="journal article" date="2014" name="G3 (Bethesda)">
        <title>The reference genome sequence of Saccharomyces cerevisiae: Then and now.</title>
        <authorList>
            <person name="Engel S.R."/>
            <person name="Dietrich F.S."/>
            <person name="Fisk D.G."/>
            <person name="Binkley G."/>
            <person name="Balakrishnan R."/>
            <person name="Costanzo M.C."/>
            <person name="Dwight S.S."/>
            <person name="Hitz B.C."/>
            <person name="Karra K."/>
            <person name="Nash R.S."/>
            <person name="Weng S."/>
            <person name="Wong E.D."/>
            <person name="Lloyd P."/>
            <person name="Skrzypek M.S."/>
            <person name="Miyasato S.R."/>
            <person name="Simison M."/>
            <person name="Cherry J.M."/>
        </authorList>
    </citation>
    <scope>GENOME REANNOTATION</scope>
    <source>
        <strain>ATCC 204508 / S288c</strain>
    </source>
</reference>
<reference key="3">
    <citation type="journal article" date="2002" name="Genome Res.">
        <title>Parallel identification of new genes in Saccharomyces cerevisiae.</title>
        <authorList>
            <person name="Oshiro G."/>
            <person name="Wodicka L.M."/>
            <person name="Washburn M.P."/>
            <person name="Yates J.R. III"/>
            <person name="Lockhart D.J."/>
            <person name="Winzeler E.A."/>
        </authorList>
    </citation>
    <scope>IDENTIFICATION BY MASS SPECTROMETRY</scope>
</reference>
<name>YB96B_YEAST</name>
<sequence>MWVVLSKEKILLKKAYYAKTILFSALVLRGVRGE</sequence>
<keyword id="KW-1185">Reference proteome</keyword>